<evidence type="ECO:0000250" key="1"/>
<evidence type="ECO:0000255" key="2">
    <source>
        <dbReference type="PROSITE-ProRule" id="PRU00448"/>
    </source>
</evidence>
<evidence type="ECO:0000269" key="3">
    <source>
    </source>
</evidence>
<evidence type="ECO:0000269" key="4">
    <source>
    </source>
</evidence>
<evidence type="ECO:0000269" key="5">
    <source>
    </source>
</evidence>
<evidence type="ECO:0000269" key="6">
    <source>
    </source>
</evidence>
<evidence type="ECO:0000269" key="7">
    <source>
    </source>
</evidence>
<evidence type="ECO:0000269" key="8">
    <source>
    </source>
</evidence>
<evidence type="ECO:0000269" key="9">
    <source>
    </source>
</evidence>
<evidence type="ECO:0000269" key="10">
    <source>
    </source>
</evidence>
<evidence type="ECO:0000269" key="11">
    <source>
    </source>
</evidence>
<evidence type="ECO:0000269" key="12">
    <source>
    </source>
</evidence>
<evidence type="ECO:0000269" key="13">
    <source>
    </source>
</evidence>
<evidence type="ECO:0000305" key="14"/>
<gene>
    <name type="primary">calA</name>
    <name type="synonym">camA</name>
    <name type="ORF">DDB_G0279407</name>
</gene>
<name>CALM_DICDI</name>
<protein>
    <recommendedName>
        <fullName>Calmodulin</fullName>
        <shortName>CaM</shortName>
    </recommendedName>
</protein>
<keyword id="KW-0007">Acetylation</keyword>
<keyword id="KW-0106">Calcium</keyword>
<keyword id="KW-0131">Cell cycle</keyword>
<keyword id="KW-0132">Cell division</keyword>
<keyword id="KW-0903">Direct protein sequencing</keyword>
<keyword id="KW-0479">Metal-binding</keyword>
<keyword id="KW-1185">Reference proteome</keyword>
<keyword id="KW-0677">Repeat</keyword>
<keyword id="KW-0926">Vacuole</keyword>
<sequence>MASQESLTEEQIAEFKEAFSLFDKDGDGSITTKELGTVMRSLGQNPTEAELQDMINEVDADGNGNIDFPEFLTMMARKMQDTDTEEEIREAFKVFDKDGNGYISAAELRHVMTSLGEKLTNEEVDEMIREADLDGDGQVNYDEFVKMMIVRN</sequence>
<proteinExistence type="evidence at protein level"/>
<dbReference type="EMBL" id="M64089">
    <property type="protein sequence ID" value="AAA33172.1"/>
    <property type="molecule type" value="Genomic_DNA"/>
</dbReference>
<dbReference type="EMBL" id="AAFI02000031">
    <property type="protein sequence ID" value="EAL67642.1"/>
    <property type="molecule type" value="Genomic_DNA"/>
</dbReference>
<dbReference type="EMBL" id="M13009">
    <property type="protein sequence ID" value="AAA33171.1"/>
    <property type="molecule type" value="mRNA"/>
</dbReference>
<dbReference type="PIR" id="A03029">
    <property type="entry name" value="MCDO"/>
</dbReference>
<dbReference type="RefSeq" id="XP_641695.1">
    <property type="nucleotide sequence ID" value="XM_636603.1"/>
</dbReference>
<dbReference type="SMR" id="P02599"/>
<dbReference type="BioGRID" id="1247107">
    <property type="interactions" value="3"/>
</dbReference>
<dbReference type="ELM" id="P02599"/>
<dbReference type="FunCoup" id="P02599">
    <property type="interactions" value="571"/>
</dbReference>
<dbReference type="IntAct" id="P02599">
    <property type="interactions" value="4"/>
</dbReference>
<dbReference type="MINT" id="P02599"/>
<dbReference type="STRING" id="44689.P02599"/>
<dbReference type="PaxDb" id="44689-DDB0214955"/>
<dbReference type="EnsemblProtists" id="EAL67642">
    <property type="protein sequence ID" value="EAL67642"/>
    <property type="gene ID" value="DDB_G0279407"/>
</dbReference>
<dbReference type="GeneID" id="8622104"/>
<dbReference type="KEGG" id="ddi:DDB_G0279407"/>
<dbReference type="dictyBase" id="DDB_G0279407">
    <property type="gene designation" value="calA"/>
</dbReference>
<dbReference type="VEuPathDB" id="AmoebaDB:DDB_G0279407"/>
<dbReference type="eggNOG" id="KOG0027">
    <property type="taxonomic scope" value="Eukaryota"/>
</dbReference>
<dbReference type="HOGENOM" id="CLU_061288_2_0_1"/>
<dbReference type="InParanoid" id="P02599"/>
<dbReference type="OMA" id="ARKMKEC"/>
<dbReference type="PhylomeDB" id="P02599"/>
<dbReference type="Reactome" id="R-DDI-111932">
    <property type="pathway name" value="CaMK IV-mediated phosphorylation of CREB"/>
</dbReference>
<dbReference type="Reactome" id="R-DDI-111957">
    <property type="pathway name" value="Cam-PDE 1 activation"/>
</dbReference>
<dbReference type="Reactome" id="R-DDI-114608">
    <property type="pathway name" value="Platelet degranulation"/>
</dbReference>
<dbReference type="Reactome" id="R-DDI-1474151">
    <property type="pathway name" value="Tetrahydrobiopterin (BH4) synthesis, recycling, salvage and regulation"/>
</dbReference>
<dbReference type="Reactome" id="R-DDI-163615">
    <property type="pathway name" value="PKA activation"/>
</dbReference>
<dbReference type="Reactome" id="R-DDI-1855204">
    <property type="pathway name" value="Synthesis of IP3 and IP4 in the cytosol"/>
</dbReference>
<dbReference type="Reactome" id="R-DDI-203615">
    <property type="pathway name" value="eNOS activation"/>
</dbReference>
<dbReference type="Reactome" id="R-DDI-2871809">
    <property type="pathway name" value="FCERI mediated Ca+2 mobilization"/>
</dbReference>
<dbReference type="Reactome" id="R-DDI-4086398">
    <property type="pathway name" value="Ca2+ pathway"/>
</dbReference>
<dbReference type="Reactome" id="R-DDI-442729">
    <property type="pathway name" value="CREB1 phosphorylation through the activation of CaMKII/CaMKK/CaMKIV cascasde"/>
</dbReference>
<dbReference type="Reactome" id="R-DDI-5218920">
    <property type="pathway name" value="VEGFR2 mediated vascular permeability"/>
</dbReference>
<dbReference type="Reactome" id="R-DDI-5607763">
    <property type="pathway name" value="CLEC7A (Dectin-1) induces NFAT activation"/>
</dbReference>
<dbReference type="Reactome" id="R-DDI-5626467">
    <property type="pathway name" value="RHO GTPases activate IQGAPs"/>
</dbReference>
<dbReference type="Reactome" id="R-DDI-6798695">
    <property type="pathway name" value="Neutrophil degranulation"/>
</dbReference>
<dbReference type="Reactome" id="R-DDI-9009391">
    <property type="pathway name" value="Extra-nuclear estrogen signaling"/>
</dbReference>
<dbReference type="Reactome" id="R-DDI-9619229">
    <property type="pathway name" value="Activation of RAC1 downstream of NMDARs"/>
</dbReference>
<dbReference type="PRO" id="PR:P02599"/>
<dbReference type="Proteomes" id="UP000002195">
    <property type="component" value="Chromosome 3"/>
</dbReference>
<dbReference type="GO" id="GO:0000331">
    <property type="term" value="C:contractile vacuole"/>
    <property type="evidence" value="ECO:0000314"/>
    <property type="project" value="dictyBase"/>
</dbReference>
<dbReference type="GO" id="GO:0005737">
    <property type="term" value="C:cytoplasm"/>
    <property type="evidence" value="ECO:0000314"/>
    <property type="project" value="dictyBase"/>
</dbReference>
<dbReference type="GO" id="GO:0031012">
    <property type="term" value="C:extracellular matrix"/>
    <property type="evidence" value="ECO:0000314"/>
    <property type="project" value="dictyBase"/>
</dbReference>
<dbReference type="GO" id="GO:0005615">
    <property type="term" value="C:extracellular space"/>
    <property type="evidence" value="ECO:0000314"/>
    <property type="project" value="dictyBase"/>
</dbReference>
<dbReference type="GO" id="GO:0005634">
    <property type="term" value="C:nucleus"/>
    <property type="evidence" value="ECO:0000314"/>
    <property type="project" value="dictyBase"/>
</dbReference>
<dbReference type="GO" id="GO:0005509">
    <property type="term" value="F:calcium ion binding"/>
    <property type="evidence" value="ECO:0000314"/>
    <property type="project" value="dictyBase"/>
</dbReference>
<dbReference type="GO" id="GO:0048306">
    <property type="term" value="F:calcium-dependent protein binding"/>
    <property type="evidence" value="ECO:0000353"/>
    <property type="project" value="dictyBase"/>
</dbReference>
<dbReference type="GO" id="GO:0050839">
    <property type="term" value="F:cell adhesion molecule binding"/>
    <property type="evidence" value="ECO:0000353"/>
    <property type="project" value="dictyBase"/>
</dbReference>
<dbReference type="GO" id="GO:0170005">
    <property type="term" value="F:cyclic nucleotide phosphodiesterase activator activity"/>
    <property type="evidence" value="ECO:0000314"/>
    <property type="project" value="dictyBase"/>
</dbReference>
<dbReference type="GO" id="GO:0004112">
    <property type="term" value="F:cyclic-nucleotide phosphodiesterase activity"/>
    <property type="evidence" value="ECO:0000314"/>
    <property type="project" value="dictyBase"/>
</dbReference>
<dbReference type="GO" id="GO:0030234">
    <property type="term" value="F:enzyme regulator activity"/>
    <property type="evidence" value="ECO:0000318"/>
    <property type="project" value="GO_Central"/>
</dbReference>
<dbReference type="GO" id="GO:0019900">
    <property type="term" value="F:kinase binding"/>
    <property type="evidence" value="ECO:0000353"/>
    <property type="project" value="dictyBase"/>
</dbReference>
<dbReference type="GO" id="GO:0017024">
    <property type="term" value="F:myosin I binding"/>
    <property type="evidence" value="ECO:0000314"/>
    <property type="project" value="dictyBase"/>
</dbReference>
<dbReference type="GO" id="GO:0019901">
    <property type="term" value="F:protein kinase binding"/>
    <property type="evidence" value="ECO:0000353"/>
    <property type="project" value="dictyBase"/>
</dbReference>
<dbReference type="GO" id="GO:0019887">
    <property type="term" value="F:protein kinase regulator activity"/>
    <property type="evidence" value="ECO:0000314"/>
    <property type="project" value="dictyBase"/>
</dbReference>
<dbReference type="GO" id="GO:0031013">
    <property type="term" value="F:troponin I binding"/>
    <property type="evidence" value="ECO:0000314"/>
    <property type="project" value="dictyBase"/>
</dbReference>
<dbReference type="GO" id="GO:0072666">
    <property type="term" value="P:establishment of protein localization to vacuole"/>
    <property type="evidence" value="ECO:0000314"/>
    <property type="project" value="dictyBase"/>
</dbReference>
<dbReference type="GO" id="GO:0000226">
    <property type="term" value="P:microtubule cytoskeleton organization"/>
    <property type="evidence" value="ECO:0000318"/>
    <property type="project" value="GO_Central"/>
</dbReference>
<dbReference type="GO" id="GO:0000281">
    <property type="term" value="P:mitotic cytokinesis"/>
    <property type="evidence" value="ECO:0000315"/>
    <property type="project" value="dictyBase"/>
</dbReference>
<dbReference type="GO" id="GO:1903665">
    <property type="term" value="P:negative regulation of asexual reproduction"/>
    <property type="evidence" value="ECO:0000314"/>
    <property type="project" value="dictyBase"/>
</dbReference>
<dbReference type="GO" id="GO:0045861">
    <property type="term" value="P:negative regulation of proteolysis"/>
    <property type="evidence" value="ECO:0000314"/>
    <property type="project" value="dictyBase"/>
</dbReference>
<dbReference type="GO" id="GO:0001778">
    <property type="term" value="P:plasma membrane repair"/>
    <property type="evidence" value="ECO:0000314"/>
    <property type="project" value="dictyBase"/>
</dbReference>
<dbReference type="GO" id="GO:0061122">
    <property type="term" value="P:positive regulation of positive chemotaxis to cAMP"/>
    <property type="evidence" value="ECO:0000314"/>
    <property type="project" value="dictyBase"/>
</dbReference>
<dbReference type="GO" id="GO:0051284">
    <property type="term" value="P:positive regulation of sequestering of calcium ion"/>
    <property type="evidence" value="ECO:0000315"/>
    <property type="project" value="dictyBase"/>
</dbReference>
<dbReference type="GO" id="GO:0006611">
    <property type="term" value="P:protein export from nucleus"/>
    <property type="evidence" value="ECO:0000315"/>
    <property type="project" value="dictyBase"/>
</dbReference>
<dbReference type="GO" id="GO:0031285">
    <property type="term" value="P:regulation of sorocarp stalk cell differentiation"/>
    <property type="evidence" value="ECO:0000315"/>
    <property type="project" value="dictyBase"/>
</dbReference>
<dbReference type="CDD" id="cd00051">
    <property type="entry name" value="EFh"/>
    <property type="match status" value="2"/>
</dbReference>
<dbReference type="FunFam" id="1.10.238.10:FF:000006">
    <property type="entry name" value="Calmodulin 1"/>
    <property type="match status" value="1"/>
</dbReference>
<dbReference type="FunFam" id="1.10.238.10:FF:000398">
    <property type="entry name" value="Calmodulin-like protein 3"/>
    <property type="match status" value="1"/>
</dbReference>
<dbReference type="Gene3D" id="1.10.238.10">
    <property type="entry name" value="EF-hand"/>
    <property type="match status" value="3"/>
</dbReference>
<dbReference type="InterPro" id="IPR050230">
    <property type="entry name" value="CALM/Myosin/TropC-like"/>
</dbReference>
<dbReference type="InterPro" id="IPR011992">
    <property type="entry name" value="EF-hand-dom_pair"/>
</dbReference>
<dbReference type="InterPro" id="IPR018247">
    <property type="entry name" value="EF_Hand_1_Ca_BS"/>
</dbReference>
<dbReference type="InterPro" id="IPR002048">
    <property type="entry name" value="EF_hand_dom"/>
</dbReference>
<dbReference type="PANTHER" id="PTHR23048:SF0">
    <property type="entry name" value="CALMODULIN LIKE 3"/>
    <property type="match status" value="1"/>
</dbReference>
<dbReference type="PANTHER" id="PTHR23048">
    <property type="entry name" value="MYOSIN LIGHT CHAIN 1, 3"/>
    <property type="match status" value="1"/>
</dbReference>
<dbReference type="Pfam" id="PF13499">
    <property type="entry name" value="EF-hand_7"/>
    <property type="match status" value="2"/>
</dbReference>
<dbReference type="PRINTS" id="PR00450">
    <property type="entry name" value="RECOVERIN"/>
</dbReference>
<dbReference type="SMART" id="SM00054">
    <property type="entry name" value="EFh"/>
    <property type="match status" value="4"/>
</dbReference>
<dbReference type="SUPFAM" id="SSF47473">
    <property type="entry name" value="EF-hand"/>
    <property type="match status" value="1"/>
</dbReference>
<dbReference type="PROSITE" id="PS00018">
    <property type="entry name" value="EF_HAND_1"/>
    <property type="match status" value="4"/>
</dbReference>
<dbReference type="PROSITE" id="PS50222">
    <property type="entry name" value="EF_HAND_2"/>
    <property type="match status" value="4"/>
</dbReference>
<organism>
    <name type="scientific">Dictyostelium discoideum</name>
    <name type="common">Social amoeba</name>
    <dbReference type="NCBI Taxonomy" id="44689"/>
    <lineage>
        <taxon>Eukaryota</taxon>
        <taxon>Amoebozoa</taxon>
        <taxon>Evosea</taxon>
        <taxon>Eumycetozoa</taxon>
        <taxon>Dictyostelia</taxon>
        <taxon>Dictyosteliales</taxon>
        <taxon>Dictyosteliaceae</taxon>
        <taxon>Dictyostelium</taxon>
    </lineage>
</organism>
<comment type="function">
    <text evidence="7 12 13">Calmodulin mediates the control of a large number of enzymes, ion channels and other proteins by Ca(2+). Among the enzymes to be stimulated by the calmodulin-Ca(2+) complex are a number of protein kinases and phosphatases.</text>
</comment>
<comment type="subunit">
    <text evidence="3 6 8 9 11">Interacts with cmbB, numA/nucleomorphin, pgkA/phosphoglycerate kinase, and thyB/thymidine kinase in the presence of Ca(2+). Interacts with dwwA in the absence of Ca(2+).</text>
</comment>
<comment type="interaction">
    <interactant intactId="EBI-1808395">
        <id>P02599</id>
    </interactant>
    <interactant intactId="EBI-8446773">
        <id>P54657</id>
        <label>cadA</label>
    </interactant>
    <organismsDiffer>false</organismsDiffer>
    <experiments>4</experiments>
</comment>
<comment type="interaction">
    <interactant intactId="EBI-1808395">
        <id>P02599</id>
    </interactant>
    <interactant intactId="EBI-6256975">
        <id>Q9GPK9</id>
        <label>cyrA</label>
    </interactant>
    <organismsDiffer>false</organismsDiffer>
    <experiments>2</experiments>
</comment>
<comment type="subcellular location">
    <subcellularLocation>
        <location evidence="10">Contractile vacuole</location>
    </subcellularLocation>
</comment>
<comment type="developmental stage">
    <text evidence="4 5">Expressed during development. Expression levels decrease steadily from the initiation of development until late culmination.</text>
</comment>
<comment type="PTM">
    <text>The N-terminus is blocked.</text>
</comment>
<comment type="PTM">
    <text>Trimethylation of Lys-118 observed in other calmodulins is absent here.</text>
</comment>
<comment type="miscellaneous">
    <text>This protein has four functional calcium-binding sites.</text>
</comment>
<comment type="miscellaneous">
    <text>Loss-of-function mutant (antisense inhibition) fail to complete the final step of cytokinesis and form multinucleated cells.</text>
</comment>
<comment type="similarity">
    <text evidence="14">Belongs to the calmodulin family.</text>
</comment>
<reference key="1">
    <citation type="journal article" date="1992" name="Mol. Biol. Cell">
        <title>Inducible expression of calmodulin antisense RNA in Dictyostelium cells inhibits the completion of cytokinesis.</title>
        <authorList>
            <person name="Liu T."/>
            <person name="Williams J.G."/>
            <person name="Clarke M."/>
        </authorList>
    </citation>
    <scope>NUCLEOTIDE SEQUENCE [GENOMIC DNA]</scope>
    <scope>FUNCTION</scope>
</reference>
<reference key="2">
    <citation type="journal article" date="2005" name="Nature">
        <title>The genome of the social amoeba Dictyostelium discoideum.</title>
        <authorList>
            <person name="Eichinger L."/>
            <person name="Pachebat J.A."/>
            <person name="Gloeckner G."/>
            <person name="Rajandream M.A."/>
            <person name="Sucgang R."/>
            <person name="Berriman M."/>
            <person name="Song J."/>
            <person name="Olsen R."/>
            <person name="Szafranski K."/>
            <person name="Xu Q."/>
            <person name="Tunggal B."/>
            <person name="Kummerfeld S."/>
            <person name="Madera M."/>
            <person name="Konfortov B.A."/>
            <person name="Rivero F."/>
            <person name="Bankier A.T."/>
            <person name="Lehmann R."/>
            <person name="Hamlin N."/>
            <person name="Davies R."/>
            <person name="Gaudet P."/>
            <person name="Fey P."/>
            <person name="Pilcher K."/>
            <person name="Chen G."/>
            <person name="Saunders D."/>
            <person name="Sodergren E.J."/>
            <person name="Davis P."/>
            <person name="Kerhornou A."/>
            <person name="Nie X."/>
            <person name="Hall N."/>
            <person name="Anjard C."/>
            <person name="Hemphill L."/>
            <person name="Bason N."/>
            <person name="Farbrother P."/>
            <person name="Desany B."/>
            <person name="Just E."/>
            <person name="Morio T."/>
            <person name="Rost R."/>
            <person name="Churcher C.M."/>
            <person name="Cooper J."/>
            <person name="Haydock S."/>
            <person name="van Driessche N."/>
            <person name="Cronin A."/>
            <person name="Goodhead I."/>
            <person name="Muzny D.M."/>
            <person name="Mourier T."/>
            <person name="Pain A."/>
            <person name="Lu M."/>
            <person name="Harper D."/>
            <person name="Lindsay R."/>
            <person name="Hauser H."/>
            <person name="James K.D."/>
            <person name="Quiles M."/>
            <person name="Madan Babu M."/>
            <person name="Saito T."/>
            <person name="Buchrieser C."/>
            <person name="Wardroper A."/>
            <person name="Felder M."/>
            <person name="Thangavelu M."/>
            <person name="Johnson D."/>
            <person name="Knights A."/>
            <person name="Loulseged H."/>
            <person name="Mungall K.L."/>
            <person name="Oliver K."/>
            <person name="Price C."/>
            <person name="Quail M.A."/>
            <person name="Urushihara H."/>
            <person name="Hernandez J."/>
            <person name="Rabbinowitsch E."/>
            <person name="Steffen D."/>
            <person name="Sanders M."/>
            <person name="Ma J."/>
            <person name="Kohara Y."/>
            <person name="Sharp S."/>
            <person name="Simmonds M.N."/>
            <person name="Spiegler S."/>
            <person name="Tivey A."/>
            <person name="Sugano S."/>
            <person name="White B."/>
            <person name="Walker D."/>
            <person name="Woodward J.R."/>
            <person name="Winckler T."/>
            <person name="Tanaka Y."/>
            <person name="Shaulsky G."/>
            <person name="Schleicher M."/>
            <person name="Weinstock G.M."/>
            <person name="Rosenthal A."/>
            <person name="Cox E.C."/>
            <person name="Chisholm R.L."/>
            <person name="Gibbs R.A."/>
            <person name="Loomis W.F."/>
            <person name="Platzer M."/>
            <person name="Kay R.R."/>
            <person name="Williams J.G."/>
            <person name="Dear P.H."/>
            <person name="Noegel A.A."/>
            <person name="Barrell B.G."/>
            <person name="Kuspa A."/>
        </authorList>
    </citation>
    <scope>NUCLEOTIDE SEQUENCE [LARGE SCALE GENOMIC DNA]</scope>
    <source>
        <strain>AX4</strain>
    </source>
</reference>
<reference key="3">
    <citation type="journal article" date="1984" name="Biochemistry">
        <title>Structural and functional properties of calmodulin from the eukaryotic microorganism Dictyostelium discoideum.</title>
        <authorList>
            <person name="Marshak D.R."/>
            <person name="Clarke M."/>
            <person name="Roberts D.M."/>
            <person name="Watterson D.M."/>
        </authorList>
    </citation>
    <scope>PROTEIN SEQUENCE OF 2-152</scope>
    <scope>FUNCTION</scope>
    <scope>BLOCKAGE OF N-TERMINUS</scope>
    <source>
        <strain>AX3</strain>
    </source>
</reference>
<reference key="4">
    <citation type="journal article" date="1986" name="Mol. Cell. Biol.">
        <title>Identification of the single gene for calmodulin in Dictyostelium discoideum.</title>
        <authorList>
            <person name="Goldhagen H."/>
            <person name="Clarke M."/>
        </authorList>
    </citation>
    <scope>NUCLEOTIDE SEQUENCE [MRNA] OF 14-152</scope>
</reference>
<reference key="5">
    <citation type="journal article" date="1980" name="J. Bacteriol.">
        <title>Isolation and properties of calmodulin from Dictyostelium discoideum.</title>
        <authorList>
            <person name="Clarke M."/>
            <person name="Bazari W.L."/>
            <person name="Kayman S.C."/>
        </authorList>
    </citation>
    <scope>IDENTIFICATION</scope>
    <scope>FUNCTION</scope>
</reference>
<reference key="6">
    <citation type="journal article" date="1992" name="J. Cell Biol.">
        <title>Association of calmodulin and an unconventional myosin with the contractile vacuole complex of Dictyostelium discoideum.</title>
        <authorList>
            <person name="Zhu Q."/>
            <person name="Clarke M."/>
        </authorList>
    </citation>
    <scope>SUBCELLULAR LOCATION</scope>
</reference>
<reference key="7">
    <citation type="journal article" date="2002" name="Development">
        <title>A transcriptional profile of multicellular development in Dictyostelium discoideum.</title>
        <authorList>
            <person name="Van Driessche N."/>
            <person name="Shaw C."/>
            <person name="Katoh M."/>
            <person name="Morio T."/>
            <person name="Sucgang R."/>
            <person name="Ibarra M."/>
            <person name="Kuwayama H."/>
            <person name="Saito T."/>
            <person name="Urushihara H."/>
            <person name="Maeda M."/>
            <person name="Takeuchi I."/>
            <person name="Ochiai H."/>
            <person name="Eaton W."/>
            <person name="Tollett J."/>
            <person name="Halter J."/>
            <person name="Kuspa A."/>
            <person name="Tanaka Y."/>
            <person name="Shaulsky G."/>
        </authorList>
    </citation>
    <scope>DEVELOPMENTAL STAGE</scope>
</reference>
<reference key="8">
    <citation type="journal article" date="2002" name="J. Biol. Chem.">
        <title>Nucleomorphin. A novel, acidic, nuclear calmodulin-binding protein from Dictyostelium that regulates nuclear number.</title>
        <authorList>
            <person name="Myre M.A."/>
            <person name="O'Day D.H."/>
        </authorList>
    </citation>
    <scope>INTERACTION WITH NUMA</scope>
</reference>
<reference key="9">
    <citation type="journal article" date="2003" name="Eukaryot. Cell">
        <title>Genome-wide expression analyses of gene regulation during early development of Dictyostelium discoideum.</title>
        <authorList>
            <person name="Iranfar N."/>
            <person name="Fuller D."/>
            <person name="Loomis W.F."/>
        </authorList>
    </citation>
    <scope>DEVELOPMENTAL STAGE</scope>
</reference>
<reference key="10">
    <citation type="journal article" date="2004" name="Biochim. Biophys. Acta">
        <title>Calmodulin binds to and inhibits the activity of phosphoglycerate kinase.</title>
        <authorList>
            <person name="Myre M.A."/>
            <person name="O'Day D.H."/>
        </authorList>
    </citation>
    <scope>INTERACTION WITH PGKA</scope>
</reference>
<reference key="11">
    <citation type="journal article" date="2004" name="Mol. Biol. Cell">
        <title>DWWA, a novel protein containing two WW domains and an IQ motif, is required for scission of the residual cytoplasmic bridge during cytokinesis in Dictyostelium.</title>
        <authorList>
            <person name="Nagasaki A."/>
            <person name="Uyeda T.Q.P."/>
        </authorList>
    </citation>
    <scope>INTERACTION WITH DWWA</scope>
</reference>
<reference key="12">
    <citation type="journal article" date="2005" name="Biochem. Biophys. Res. Commun.">
        <title>Isolation and characterization of Dictyostelium thymidine kinase 1 as a calmodulin-binding protein.</title>
        <authorList>
            <person name="O'Day D.H."/>
            <person name="Chatterjee-Chakraborty M."/>
            <person name="Wagler S."/>
            <person name="Myre M.A."/>
        </authorList>
    </citation>
    <scope>INTERACTION WITH THYB</scope>
</reference>
<reference key="13">
    <citation type="journal article" date="2006" name="Biochem. Biophys. Res. Commun.">
        <title>Isolation, characterization, and bioinformatic analysis of calmodulin-binding protein cmbB reveals a novel tandem IP22 repeat common to many Dictyostelium and Mimivirus proteins.</title>
        <authorList>
            <person name="O'Day D.H."/>
            <person name="Suhre K."/>
            <person name="Myre M.A."/>
            <person name="Chatterjee-Chakraborty M."/>
            <person name="Chavez S.E."/>
        </authorList>
    </citation>
    <scope>INTERACTION WITH CMBB</scope>
</reference>
<reference key="14">
    <citation type="journal article" date="2006" name="Eur. J. Cell Biol.">
        <title>Identification and isolation of Dictyostelium microtubule-associated protein interactors by tandem affinity purification.</title>
        <authorList>
            <person name="Koch K.V."/>
            <person name="Reinders Y."/>
            <person name="Ho T.-H."/>
            <person name="Sickmann A."/>
            <person name="Graef R."/>
        </authorList>
    </citation>
    <scope>IDENTIFICATION BY MASS SPECTROMETRY [LARGE SCALE ANALYSIS]</scope>
    <source>
        <strain>AX2</strain>
    </source>
</reference>
<accession>P02599</accession>
<accession>Q54WM2</accession>
<feature type="initiator methionine" description="Removed" evidence="12">
    <location>
        <position position="1"/>
    </location>
</feature>
<feature type="chain" id="PRO_0000198252" description="Calmodulin">
    <location>
        <begin position="2"/>
        <end position="152"/>
    </location>
</feature>
<feature type="domain" description="EF-hand 1" evidence="2">
    <location>
        <begin position="10"/>
        <end position="45"/>
    </location>
</feature>
<feature type="domain" description="EF-hand 2" evidence="2">
    <location>
        <begin position="46"/>
        <end position="81"/>
    </location>
</feature>
<feature type="domain" description="EF-hand 3" evidence="2">
    <location>
        <begin position="83"/>
        <end position="118"/>
    </location>
</feature>
<feature type="domain" description="EF-hand 4" evidence="2">
    <location>
        <begin position="119"/>
        <end position="152"/>
    </location>
</feature>
<feature type="binding site" evidence="2">
    <location>
        <position position="23"/>
    </location>
    <ligand>
        <name>Ca(2+)</name>
        <dbReference type="ChEBI" id="CHEBI:29108"/>
        <label>1</label>
    </ligand>
</feature>
<feature type="binding site" evidence="2">
    <location>
        <position position="25"/>
    </location>
    <ligand>
        <name>Ca(2+)</name>
        <dbReference type="ChEBI" id="CHEBI:29108"/>
        <label>1</label>
    </ligand>
</feature>
<feature type="binding site" evidence="2">
    <location>
        <position position="27"/>
    </location>
    <ligand>
        <name>Ca(2+)</name>
        <dbReference type="ChEBI" id="CHEBI:29108"/>
        <label>1</label>
    </ligand>
</feature>
<feature type="binding site" evidence="2">
    <location>
        <position position="29"/>
    </location>
    <ligand>
        <name>Ca(2+)</name>
        <dbReference type="ChEBI" id="CHEBI:29108"/>
        <label>1</label>
    </ligand>
</feature>
<feature type="binding site" evidence="2">
    <location>
        <position position="34"/>
    </location>
    <ligand>
        <name>Ca(2+)</name>
        <dbReference type="ChEBI" id="CHEBI:29108"/>
        <label>1</label>
    </ligand>
</feature>
<feature type="binding site" evidence="2">
    <location>
        <position position="59"/>
    </location>
    <ligand>
        <name>Ca(2+)</name>
        <dbReference type="ChEBI" id="CHEBI:29108"/>
        <label>2</label>
    </ligand>
</feature>
<feature type="binding site" evidence="2">
    <location>
        <position position="61"/>
    </location>
    <ligand>
        <name>Ca(2+)</name>
        <dbReference type="ChEBI" id="CHEBI:29108"/>
        <label>2</label>
    </ligand>
</feature>
<feature type="binding site" evidence="2">
    <location>
        <position position="63"/>
    </location>
    <ligand>
        <name>Ca(2+)</name>
        <dbReference type="ChEBI" id="CHEBI:29108"/>
        <label>2</label>
    </ligand>
</feature>
<feature type="binding site" evidence="2">
    <location>
        <position position="65"/>
    </location>
    <ligand>
        <name>Ca(2+)</name>
        <dbReference type="ChEBI" id="CHEBI:29108"/>
        <label>2</label>
    </ligand>
</feature>
<feature type="binding site" evidence="2">
    <location>
        <position position="70"/>
    </location>
    <ligand>
        <name>Ca(2+)</name>
        <dbReference type="ChEBI" id="CHEBI:29108"/>
        <label>2</label>
    </ligand>
</feature>
<feature type="binding site" evidence="2">
    <location>
        <position position="96"/>
    </location>
    <ligand>
        <name>Ca(2+)</name>
        <dbReference type="ChEBI" id="CHEBI:29108"/>
        <label>3</label>
    </ligand>
</feature>
<feature type="binding site" evidence="2">
    <location>
        <position position="98"/>
    </location>
    <ligand>
        <name>Ca(2+)</name>
        <dbReference type="ChEBI" id="CHEBI:29108"/>
        <label>3</label>
    </ligand>
</feature>
<feature type="binding site" evidence="2">
    <location>
        <position position="100"/>
    </location>
    <ligand>
        <name>Ca(2+)</name>
        <dbReference type="ChEBI" id="CHEBI:29108"/>
        <label>3</label>
    </ligand>
</feature>
<feature type="binding site" evidence="2">
    <location>
        <position position="102"/>
    </location>
    <ligand>
        <name>Ca(2+)</name>
        <dbReference type="ChEBI" id="CHEBI:29108"/>
        <label>3</label>
    </ligand>
</feature>
<feature type="binding site" evidence="2">
    <location>
        <position position="107"/>
    </location>
    <ligand>
        <name>Ca(2+)</name>
        <dbReference type="ChEBI" id="CHEBI:29108"/>
        <label>3</label>
    </ligand>
</feature>
<feature type="binding site" evidence="2">
    <location>
        <position position="132"/>
    </location>
    <ligand>
        <name>Ca(2+)</name>
        <dbReference type="ChEBI" id="CHEBI:29108"/>
        <label>4</label>
    </ligand>
</feature>
<feature type="binding site" evidence="2">
    <location>
        <position position="134"/>
    </location>
    <ligand>
        <name>Ca(2+)</name>
        <dbReference type="ChEBI" id="CHEBI:29108"/>
        <label>4</label>
    </ligand>
</feature>
<feature type="binding site" evidence="2">
    <location>
        <position position="136"/>
    </location>
    <ligand>
        <name>Ca(2+)</name>
        <dbReference type="ChEBI" id="CHEBI:29108"/>
        <label>4</label>
    </ligand>
</feature>
<feature type="binding site" evidence="2">
    <location>
        <position position="138"/>
    </location>
    <ligand>
        <name>Ca(2+)</name>
        <dbReference type="ChEBI" id="CHEBI:29108"/>
        <label>4</label>
    </ligand>
</feature>
<feature type="binding site" evidence="2">
    <location>
        <position position="143"/>
    </location>
    <ligand>
        <name>Ca(2+)</name>
        <dbReference type="ChEBI" id="CHEBI:29108"/>
        <label>4</label>
    </ligand>
</feature>
<feature type="site" description="Not N6-methylated">
    <location>
        <position position="118"/>
    </location>
</feature>
<feature type="modified residue" description="N-acetylalanine" evidence="1">
    <location>
        <position position="2"/>
    </location>
</feature>